<proteinExistence type="inferred from homology"/>
<evidence type="ECO:0000255" key="1">
    <source>
        <dbReference type="HAMAP-Rule" id="MF_01395"/>
    </source>
</evidence>
<evidence type="ECO:0000255" key="2">
    <source>
        <dbReference type="PROSITE-ProRule" id="PRU01136"/>
    </source>
</evidence>
<evidence type="ECO:0000256" key="3">
    <source>
        <dbReference type="SAM" id="MobiDB-lite"/>
    </source>
</evidence>
<dbReference type="EC" id="2.1.3.15" evidence="1"/>
<dbReference type="EMBL" id="CP001510">
    <property type="protein sequence ID" value="ACS42498.1"/>
    <property type="molecule type" value="Genomic_DNA"/>
</dbReference>
<dbReference type="RefSeq" id="WP_003603557.1">
    <property type="nucleotide sequence ID" value="NC_012808.1"/>
</dbReference>
<dbReference type="SMR" id="C5ASN5"/>
<dbReference type="STRING" id="272630.MexAM1_META1p4889"/>
<dbReference type="GeneID" id="72992179"/>
<dbReference type="KEGG" id="mea:Mex_1p4889"/>
<dbReference type="eggNOG" id="COG0777">
    <property type="taxonomic scope" value="Bacteria"/>
</dbReference>
<dbReference type="HOGENOM" id="CLU_015486_1_0_5"/>
<dbReference type="OrthoDB" id="9772975at2"/>
<dbReference type="UniPathway" id="UPA00655">
    <property type="reaction ID" value="UER00711"/>
</dbReference>
<dbReference type="Proteomes" id="UP000009081">
    <property type="component" value="Chromosome"/>
</dbReference>
<dbReference type="GO" id="GO:0009329">
    <property type="term" value="C:acetate CoA-transferase complex"/>
    <property type="evidence" value="ECO:0007669"/>
    <property type="project" value="TreeGrafter"/>
</dbReference>
<dbReference type="GO" id="GO:0003989">
    <property type="term" value="F:acetyl-CoA carboxylase activity"/>
    <property type="evidence" value="ECO:0007669"/>
    <property type="project" value="InterPro"/>
</dbReference>
<dbReference type="GO" id="GO:0005524">
    <property type="term" value="F:ATP binding"/>
    <property type="evidence" value="ECO:0007669"/>
    <property type="project" value="UniProtKB-KW"/>
</dbReference>
<dbReference type="GO" id="GO:0016743">
    <property type="term" value="F:carboxyl- or carbamoyltransferase activity"/>
    <property type="evidence" value="ECO:0007669"/>
    <property type="project" value="UniProtKB-UniRule"/>
</dbReference>
<dbReference type="GO" id="GO:0006633">
    <property type="term" value="P:fatty acid biosynthetic process"/>
    <property type="evidence" value="ECO:0007669"/>
    <property type="project" value="UniProtKB-KW"/>
</dbReference>
<dbReference type="GO" id="GO:2001295">
    <property type="term" value="P:malonyl-CoA biosynthetic process"/>
    <property type="evidence" value="ECO:0007669"/>
    <property type="project" value="UniProtKB-UniRule"/>
</dbReference>
<dbReference type="Gene3D" id="3.90.226.10">
    <property type="entry name" value="2-enoyl-CoA Hydratase, Chain A, domain 1"/>
    <property type="match status" value="1"/>
</dbReference>
<dbReference type="HAMAP" id="MF_01395">
    <property type="entry name" value="AcetylCoA_CT_beta"/>
    <property type="match status" value="1"/>
</dbReference>
<dbReference type="InterPro" id="IPR034733">
    <property type="entry name" value="AcCoA_carboxyl_beta"/>
</dbReference>
<dbReference type="InterPro" id="IPR000438">
    <property type="entry name" value="Acetyl_CoA_COase_Trfase_b_su"/>
</dbReference>
<dbReference type="InterPro" id="IPR029045">
    <property type="entry name" value="ClpP/crotonase-like_dom_sf"/>
</dbReference>
<dbReference type="InterPro" id="IPR011762">
    <property type="entry name" value="COA_CT_N"/>
</dbReference>
<dbReference type="NCBIfam" id="TIGR00515">
    <property type="entry name" value="accD"/>
    <property type="match status" value="1"/>
</dbReference>
<dbReference type="PANTHER" id="PTHR42995">
    <property type="entry name" value="ACETYL-COENZYME A CARBOXYLASE CARBOXYL TRANSFERASE SUBUNIT BETA, CHLOROPLASTIC"/>
    <property type="match status" value="1"/>
</dbReference>
<dbReference type="PANTHER" id="PTHR42995:SF5">
    <property type="entry name" value="ACETYL-COENZYME A CARBOXYLASE CARBOXYL TRANSFERASE SUBUNIT BETA, CHLOROPLASTIC"/>
    <property type="match status" value="1"/>
</dbReference>
<dbReference type="Pfam" id="PF01039">
    <property type="entry name" value="Carboxyl_trans"/>
    <property type="match status" value="1"/>
</dbReference>
<dbReference type="PRINTS" id="PR01070">
    <property type="entry name" value="ACCCTRFRASEB"/>
</dbReference>
<dbReference type="SUPFAM" id="SSF52096">
    <property type="entry name" value="ClpP/crotonase"/>
    <property type="match status" value="1"/>
</dbReference>
<dbReference type="PROSITE" id="PS50980">
    <property type="entry name" value="COA_CT_NTER"/>
    <property type="match status" value="1"/>
</dbReference>
<accession>C5ASN5</accession>
<gene>
    <name evidence="1" type="primary">accD</name>
    <name type="ordered locus">MexAM1_META1p4889</name>
</gene>
<keyword id="KW-0067">ATP-binding</keyword>
<keyword id="KW-0963">Cytoplasm</keyword>
<keyword id="KW-0275">Fatty acid biosynthesis</keyword>
<keyword id="KW-0276">Fatty acid metabolism</keyword>
<keyword id="KW-0444">Lipid biosynthesis</keyword>
<keyword id="KW-0443">Lipid metabolism</keyword>
<keyword id="KW-0547">Nucleotide-binding</keyword>
<keyword id="KW-1185">Reference proteome</keyword>
<keyword id="KW-0808">Transferase</keyword>
<feature type="chain" id="PRO_0000389794" description="Acetyl-coenzyme A carboxylase carboxyl transferase subunit beta">
    <location>
        <begin position="1"/>
        <end position="307"/>
    </location>
</feature>
<feature type="domain" description="CoA carboxyltransferase N-terminal" evidence="2">
    <location>
        <begin position="28"/>
        <end position="297"/>
    </location>
</feature>
<feature type="region of interest" description="Disordered" evidence="3">
    <location>
        <begin position="286"/>
        <end position="307"/>
    </location>
</feature>
<feature type="compositionally biased region" description="Pro residues" evidence="3">
    <location>
        <begin position="292"/>
        <end position="307"/>
    </location>
</feature>
<reference key="1">
    <citation type="journal article" date="2009" name="PLoS ONE">
        <title>Methylobacterium genome sequences: a reference blueprint to investigate microbial metabolism of C1 compounds from natural and industrial sources.</title>
        <authorList>
            <person name="Vuilleumier S."/>
            <person name="Chistoserdova L."/>
            <person name="Lee M.-C."/>
            <person name="Bringel F."/>
            <person name="Lajus A."/>
            <person name="Zhou Y."/>
            <person name="Gourion B."/>
            <person name="Barbe V."/>
            <person name="Chang J."/>
            <person name="Cruveiller S."/>
            <person name="Dossat C."/>
            <person name="Gillett W."/>
            <person name="Gruffaz C."/>
            <person name="Haugen E."/>
            <person name="Hourcade E."/>
            <person name="Levy R."/>
            <person name="Mangenot S."/>
            <person name="Muller E."/>
            <person name="Nadalig T."/>
            <person name="Pagni M."/>
            <person name="Penny C."/>
            <person name="Peyraud R."/>
            <person name="Robinson D.G."/>
            <person name="Roche D."/>
            <person name="Rouy Z."/>
            <person name="Saenampechek C."/>
            <person name="Salvignol G."/>
            <person name="Vallenet D."/>
            <person name="Wu Z."/>
            <person name="Marx C.J."/>
            <person name="Vorholt J.A."/>
            <person name="Olson M.V."/>
            <person name="Kaul R."/>
            <person name="Weissenbach J."/>
            <person name="Medigue C."/>
            <person name="Lidstrom M.E."/>
        </authorList>
    </citation>
    <scope>NUCLEOTIDE SEQUENCE [LARGE SCALE GENOMIC DNA]</scope>
    <source>
        <strain>ATCC 14718 / DSM 1338 / JCM 2805 / NCIMB 9133 / AM1</strain>
    </source>
</reference>
<sequence>MVEPMNWISEVVRPRIKTLFKRETPENLWVKCPDTGQMVFHKEVEQNHWVIPGSEHHLKMSATARLKMMFDEGTWIDVPLPEVPADPLKFRDEKRYVDRLKEARAKTGMPDAFKIGFGRVGSLPMTIAAQEFGFMAGSLGMAGGEAFVRGAETALEKRTPYVLFAASGGARMQEGILSLMQMPRTTVAVRRLRAARLPYIVVLTNPTTGGVTASYAMLGDVHLAEPGALICFAGPRVIEQTIREKLPDGFQRAEYLREHGMVDQVVHRHQLKETISRLCGLLMDVRRTPEPGTAPEPTTPEPLPNAA</sequence>
<comment type="function">
    <text evidence="1">Component of the acetyl coenzyme A carboxylase (ACC) complex. Biotin carboxylase (BC) catalyzes the carboxylation of biotin on its carrier protein (BCCP) and then the CO(2) group is transferred by the transcarboxylase to acetyl-CoA to form malonyl-CoA.</text>
</comment>
<comment type="catalytic activity">
    <reaction evidence="1">
        <text>N(6)-carboxybiotinyl-L-lysyl-[protein] + acetyl-CoA = N(6)-biotinyl-L-lysyl-[protein] + malonyl-CoA</text>
        <dbReference type="Rhea" id="RHEA:54728"/>
        <dbReference type="Rhea" id="RHEA-COMP:10505"/>
        <dbReference type="Rhea" id="RHEA-COMP:10506"/>
        <dbReference type="ChEBI" id="CHEBI:57288"/>
        <dbReference type="ChEBI" id="CHEBI:57384"/>
        <dbReference type="ChEBI" id="CHEBI:83144"/>
        <dbReference type="ChEBI" id="CHEBI:83145"/>
        <dbReference type="EC" id="2.1.3.15"/>
    </reaction>
</comment>
<comment type="pathway">
    <text evidence="1">Lipid metabolism; malonyl-CoA biosynthesis; malonyl-CoA from acetyl-CoA: step 1/1.</text>
</comment>
<comment type="subunit">
    <text evidence="1">Acetyl-CoA carboxylase is a heterohexamer composed of biotin carboxyl carrier protein (AccB), biotin carboxylase (AccC) and two subunits each of ACCase subunit alpha (AccA) and ACCase subunit beta (AccD).</text>
</comment>
<comment type="subcellular location">
    <subcellularLocation>
        <location evidence="1">Cytoplasm</location>
    </subcellularLocation>
</comment>
<comment type="similarity">
    <text evidence="1">Belongs to the AccD/PCCB family.</text>
</comment>
<protein>
    <recommendedName>
        <fullName evidence="1">Acetyl-coenzyme A carboxylase carboxyl transferase subunit beta</fullName>
        <shortName evidence="1">ACCase subunit beta</shortName>
        <shortName evidence="1">Acetyl-CoA carboxylase carboxyltransferase subunit beta</shortName>
        <ecNumber evidence="1">2.1.3.15</ecNumber>
    </recommendedName>
</protein>
<organism>
    <name type="scientific">Methylorubrum extorquens (strain ATCC 14718 / DSM 1338 / JCM 2805 / NCIMB 9133 / AM1)</name>
    <name type="common">Methylobacterium extorquens</name>
    <dbReference type="NCBI Taxonomy" id="272630"/>
    <lineage>
        <taxon>Bacteria</taxon>
        <taxon>Pseudomonadati</taxon>
        <taxon>Pseudomonadota</taxon>
        <taxon>Alphaproteobacteria</taxon>
        <taxon>Hyphomicrobiales</taxon>
        <taxon>Methylobacteriaceae</taxon>
        <taxon>Methylorubrum</taxon>
    </lineage>
</organism>
<name>ACCD_METEA</name>